<accession>P68965</accession>
<accession>O39618</accession>
<accession>P35989</accession>
<name>NP_ADECU</name>
<gene>
    <name evidence="1" type="primary">L2</name>
</gene>
<sequence length="132" mass="14627">MAILISPSNNTGWGLGTHKLFGGAKQKSDQHPVYVQAHYRAPWGSKGRRRPGRARGVPLDPKTEAEVVATIDEVARNGPPAARLVLEAARRVGAYNLRRARKLTPAGRAMAAMRARQMVNQAKRRKRRVRSK</sequence>
<evidence type="ECO:0000255" key="1">
    <source>
        <dbReference type="HAMAP-Rule" id="MF_04056"/>
    </source>
</evidence>
<evidence type="ECO:0000305" key="2"/>
<dbReference type="EMBL" id="M73811">
    <property type="protein sequence ID" value="AAA75346.1"/>
    <property type="molecule type" value="Genomic_DNA"/>
</dbReference>
<dbReference type="PIR" id="B46116">
    <property type="entry name" value="B46116"/>
</dbReference>
<dbReference type="RefSeq" id="AP_000055.1">
    <property type="nucleotide sequence ID" value="AC_000003.1"/>
</dbReference>
<dbReference type="GO" id="GO:0043657">
    <property type="term" value="C:host cell"/>
    <property type="evidence" value="ECO:0007669"/>
    <property type="project" value="GOC"/>
</dbReference>
<dbReference type="GO" id="GO:0044196">
    <property type="term" value="C:host cell nucleolus"/>
    <property type="evidence" value="ECO:0007669"/>
    <property type="project" value="UniProtKB-SubCell"/>
</dbReference>
<dbReference type="GO" id="GO:0019028">
    <property type="term" value="C:viral capsid"/>
    <property type="evidence" value="ECO:0007669"/>
    <property type="project" value="InterPro"/>
</dbReference>
<dbReference type="GO" id="GO:0003677">
    <property type="term" value="F:DNA binding"/>
    <property type="evidence" value="ECO:0007669"/>
    <property type="project" value="UniProtKB-UniRule"/>
</dbReference>
<dbReference type="GO" id="GO:0046718">
    <property type="term" value="P:symbiont entry into host cell"/>
    <property type="evidence" value="ECO:0007669"/>
    <property type="project" value="UniProtKB-UniRule"/>
</dbReference>
<dbReference type="GO" id="GO:0075732">
    <property type="term" value="P:viral penetration into host nucleus"/>
    <property type="evidence" value="ECO:0007669"/>
    <property type="project" value="UniProtKB-UniRule"/>
</dbReference>
<dbReference type="HAMAP" id="MF_04056">
    <property type="entry name" value="ADV_PVII"/>
    <property type="match status" value="1"/>
</dbReference>
<dbReference type="InterPro" id="IPR004912">
    <property type="entry name" value="Adeno_VII"/>
</dbReference>
<dbReference type="Pfam" id="PF03228">
    <property type="entry name" value="Adeno_VII"/>
    <property type="match status" value="1"/>
</dbReference>
<organism>
    <name type="scientific">Canine adenovirus serotype 1 (strain Utrecht)</name>
    <name type="common">CAdV-1</name>
    <name type="synonym">Canine adenovirus 1 (strain Utrecht)</name>
    <dbReference type="NCBI Taxonomy" id="36364"/>
    <lineage>
        <taxon>Viruses</taxon>
        <taxon>Varidnaviria</taxon>
        <taxon>Bamfordvirae</taxon>
        <taxon>Preplasmiviricota</taxon>
        <taxon>Tectiliviricetes</taxon>
        <taxon>Rowavirales</taxon>
        <taxon>Adenoviridae</taxon>
        <taxon>Mastadenovirus</taxon>
        <taxon>Canine mastadenovirus A</taxon>
    </lineage>
</organism>
<organismHost>
    <name type="scientific">Canis lupus familiaris</name>
    <name type="common">Dog</name>
    <name type="synonym">Canis familiaris</name>
    <dbReference type="NCBI Taxonomy" id="9615"/>
</organismHost>
<reference key="1">
    <citation type="journal article" date="1993" name="Virology">
        <title>Primary structure of the canine adenovirus PVII protein: functional implications.</title>
        <authorList>
            <person name="Cai F."/>
            <person name="Weber J.M."/>
        </authorList>
    </citation>
    <scope>NUCLEOTIDE SEQUENCE [GENOMIC DNA]</scope>
    <scope>PARTIAL PROTEIN SEQUENCE</scope>
</reference>
<feature type="initiator methionine" description="Removed" evidence="1">
    <location>
        <position position="1"/>
    </location>
</feature>
<feature type="chain" id="PRO_0000439841" description="Pre-histone-like nucleoprotein" evidence="1">
    <location>
        <begin position="2"/>
        <end position="132"/>
    </location>
</feature>
<feature type="propeptide" id="PRO_0000439842" evidence="1">
    <location>
        <begin position="2"/>
        <end position="23"/>
    </location>
</feature>
<feature type="chain" id="PRO_0000036590" description="Histone-like nucleoprotein" evidence="1">
    <location>
        <begin position="24"/>
        <end position="132"/>
    </location>
</feature>
<feature type="short sequence motif" description="Nuclear localization signal" evidence="1">
    <location>
        <begin position="124"/>
        <end position="132"/>
    </location>
</feature>
<feature type="site" description="Cleavage; by viral protease" evidence="1">
    <location>
        <begin position="23"/>
        <end position="24"/>
    </location>
</feature>
<comment type="function">
    <text evidence="1">Plays a role in the inhibition of host immune response within the nucleus. Interacts with cellular nucleosomes and immobilizes the host immune danger signal HMGB1 on chromatin. In turn, prevents HMGB1 release out of the cell and thus decreases inflammation. Also plays a role in the wrapping and condensation of the viral DNA. May also promote viral genome import into the nucleus.</text>
</comment>
<comment type="subunit">
    <text evidence="1">Interacts with the core-capsid bridging protein; this interaction bridges the virus core to the capsid. Interacts with host NPM1; this interaction might play a role in placing the pre-histone-like nucleoprotein on the viral DNA or regulating viral gene expression. Interacts with host HMGB1; this interaction inhibits host immune response.</text>
</comment>
<comment type="subcellular location">
    <molecule>Histone-like nucleoprotein</molecule>
    <subcellularLocation>
        <location evidence="1">Virion</location>
    </subcellularLocation>
    <text evidence="1">Located inside the capsid in association with the viral DNA (core). Present in about 1070 copies per virion.</text>
</comment>
<comment type="subcellular location">
    <molecule>Pre-histone-like nucleoprotein</molecule>
    <subcellularLocation>
        <location evidence="1">Host nucleus</location>
        <location evidence="1">Host nucleolus</location>
    </subcellularLocation>
</comment>
<comment type="induction">
    <text evidence="1">Expressed in the late phase of the viral replicative cycle.</text>
</comment>
<comment type="PTM">
    <text evidence="1">Cleaved near the N-terminus by the viral protease during virion maturation to form the mature protein.</text>
</comment>
<comment type="miscellaneous">
    <text evidence="1">All late proteins expressed from the major late promoter are produced by alternative splicing and alternative polyadenylation of the same gene giving rise to non-overlapping ORFs. A leader sequence is present in the N-terminus of all these mRNAs and is recognized by the viral shutoff protein to provide expression although conventional translation via ribosome scanning from the cap has been shut off in the host cell.</text>
</comment>
<comment type="similarity">
    <text evidence="1 2">Belongs to the adenoviridae histone-like nucleoprotein family.</text>
</comment>
<keyword id="KW-0903">Direct protein sequencing</keyword>
<keyword id="KW-0238">DNA-binding</keyword>
<keyword id="KW-1048">Host nucleus</keyword>
<keyword id="KW-0945">Host-virus interaction</keyword>
<keyword id="KW-0426">Late protein</keyword>
<keyword id="KW-0597">Phosphoprotein</keyword>
<keyword id="KW-1163">Viral penetration into host nucleus</keyword>
<keyword id="KW-0946">Virion</keyword>
<keyword id="KW-1160">Virus entry into host cell</keyword>
<protein>
    <recommendedName>
        <fullName evidence="1">Pre-histone-like nucleoprotein</fullName>
    </recommendedName>
    <alternativeName>
        <fullName evidence="1">Pre-core protein VII</fullName>
        <shortName evidence="1">pVII</shortName>
    </alternativeName>
    <component>
        <recommendedName>
            <fullName evidence="1">Histone-like nucleoprotein</fullName>
            <shortName evidence="1">NP</shortName>
        </recommendedName>
        <alternativeName>
            <fullName evidence="1">Core protein VII</fullName>
        </alternativeName>
    </component>
</protein>
<proteinExistence type="evidence at protein level"/>